<reference key="1">
    <citation type="journal article" date="1986" name="J. Biochem.">
        <title>Cloning and nucleotide sequence of the aspartase gene of Pseudomonas fluorescens.</title>
        <authorList>
            <person name="Takagi J.S."/>
            <person name="Tokushige M."/>
            <person name="Shimura Y."/>
        </authorList>
    </citation>
    <scope>NUCLEOTIDE SEQUENCE [GENOMIC DNA]</scope>
    <scope>PROTEIN SEQUENCE OF 7-27 AND 476-478</scope>
    <source>
        <strain>IFO 3081</strain>
    </source>
</reference>
<reference key="2">
    <citation type="journal article" date="1984" name="J. Biochem.">
        <title>Purification, crystallization, and molecular properties of aspartase from Pseudomonas fluorescens.</title>
        <authorList>
            <person name="Takagi J.S."/>
            <person name="Fukunaga R."/>
            <person name="Tokushige M."/>
            <person name="Katsuki H."/>
        </authorList>
    </citation>
    <scope>FUNCTION</scope>
    <scope>CATALYTIC ACTIVITY</scope>
    <scope>SUBUNIT</scope>
</reference>
<protein>
    <recommendedName>
        <fullName evidence="4">Aspartate ammonia-lyase</fullName>
        <shortName evidence="4">Aspartase</shortName>
        <ecNumber evidence="2">4.3.1.1</ecNumber>
    </recommendedName>
</protein>
<proteinExistence type="evidence at protein level"/>
<dbReference type="EC" id="4.3.1.1" evidence="2"/>
<dbReference type="EMBL" id="D00100">
    <property type="protein sequence ID" value="BAA00062.1"/>
    <property type="molecule type" value="Genomic_DNA"/>
</dbReference>
<dbReference type="EMBL" id="X04441">
    <property type="protein sequence ID" value="CAA28037.1"/>
    <property type="molecule type" value="Genomic_DNA"/>
</dbReference>
<dbReference type="PIR" id="A24874">
    <property type="entry name" value="UFPSDF"/>
</dbReference>
<dbReference type="SMR" id="P07346"/>
<dbReference type="eggNOG" id="COG1027">
    <property type="taxonomic scope" value="Bacteria"/>
</dbReference>
<dbReference type="GO" id="GO:0005829">
    <property type="term" value="C:cytosol"/>
    <property type="evidence" value="ECO:0007669"/>
    <property type="project" value="TreeGrafter"/>
</dbReference>
<dbReference type="GO" id="GO:0008797">
    <property type="term" value="F:aspartate ammonia-lyase activity"/>
    <property type="evidence" value="ECO:0007669"/>
    <property type="project" value="UniProtKB-EC"/>
</dbReference>
<dbReference type="GO" id="GO:0006531">
    <property type="term" value="P:aspartate metabolic process"/>
    <property type="evidence" value="ECO:0007669"/>
    <property type="project" value="InterPro"/>
</dbReference>
<dbReference type="GO" id="GO:0006099">
    <property type="term" value="P:tricarboxylic acid cycle"/>
    <property type="evidence" value="ECO:0007669"/>
    <property type="project" value="InterPro"/>
</dbReference>
<dbReference type="CDD" id="cd01357">
    <property type="entry name" value="Aspartase"/>
    <property type="match status" value="1"/>
</dbReference>
<dbReference type="FunFam" id="1.10.40.30:FF:000002">
    <property type="entry name" value="Fumarate hydratase class II"/>
    <property type="match status" value="1"/>
</dbReference>
<dbReference type="FunFam" id="1.10.275.10:FF:000001">
    <property type="entry name" value="Fumarate hydratase, mitochondrial"/>
    <property type="match status" value="1"/>
</dbReference>
<dbReference type="FunFam" id="1.20.200.10:FF:000001">
    <property type="entry name" value="Fumarate hydratase, mitochondrial"/>
    <property type="match status" value="1"/>
</dbReference>
<dbReference type="Gene3D" id="1.10.40.30">
    <property type="entry name" value="Fumarase/aspartase (C-terminal domain)"/>
    <property type="match status" value="1"/>
</dbReference>
<dbReference type="Gene3D" id="1.20.200.10">
    <property type="entry name" value="Fumarase/aspartase (Central domain)"/>
    <property type="match status" value="1"/>
</dbReference>
<dbReference type="Gene3D" id="1.10.275.10">
    <property type="entry name" value="Fumarase/aspartase (N-terminal domain)"/>
    <property type="match status" value="1"/>
</dbReference>
<dbReference type="InterPro" id="IPR004708">
    <property type="entry name" value="ApsA"/>
</dbReference>
<dbReference type="InterPro" id="IPR051546">
    <property type="entry name" value="Aspartate_Ammonia-Lyase"/>
</dbReference>
<dbReference type="InterPro" id="IPR024083">
    <property type="entry name" value="Fumarase/histidase_N"/>
</dbReference>
<dbReference type="InterPro" id="IPR018951">
    <property type="entry name" value="Fumarase_C_C"/>
</dbReference>
<dbReference type="InterPro" id="IPR020557">
    <property type="entry name" value="Fumarate_lyase_CS"/>
</dbReference>
<dbReference type="InterPro" id="IPR000362">
    <property type="entry name" value="Fumarate_lyase_fam"/>
</dbReference>
<dbReference type="InterPro" id="IPR022761">
    <property type="entry name" value="Fumarate_lyase_N"/>
</dbReference>
<dbReference type="InterPro" id="IPR008948">
    <property type="entry name" value="L-Aspartase-like"/>
</dbReference>
<dbReference type="NCBIfam" id="TIGR00839">
    <property type="entry name" value="aspA"/>
    <property type="match status" value="1"/>
</dbReference>
<dbReference type="NCBIfam" id="NF008909">
    <property type="entry name" value="PRK12273.1"/>
    <property type="match status" value="1"/>
</dbReference>
<dbReference type="PANTHER" id="PTHR42696">
    <property type="entry name" value="ASPARTATE AMMONIA-LYASE"/>
    <property type="match status" value="1"/>
</dbReference>
<dbReference type="PANTHER" id="PTHR42696:SF2">
    <property type="entry name" value="ASPARTATE AMMONIA-LYASE"/>
    <property type="match status" value="1"/>
</dbReference>
<dbReference type="Pfam" id="PF10415">
    <property type="entry name" value="FumaraseC_C"/>
    <property type="match status" value="1"/>
</dbReference>
<dbReference type="Pfam" id="PF00206">
    <property type="entry name" value="Lyase_1"/>
    <property type="match status" value="1"/>
</dbReference>
<dbReference type="PRINTS" id="PR00149">
    <property type="entry name" value="FUMRATELYASE"/>
</dbReference>
<dbReference type="SUPFAM" id="SSF48557">
    <property type="entry name" value="L-aspartase-like"/>
    <property type="match status" value="1"/>
</dbReference>
<dbReference type="PROSITE" id="PS00163">
    <property type="entry name" value="FUMARATE_LYASES"/>
    <property type="match status" value="1"/>
</dbReference>
<name>ASPA_PSEFL</name>
<feature type="chain" id="PRO_0000161344" description="Aspartate ammonia-lyase">
    <location>
        <begin position="1"/>
        <end position="478"/>
    </location>
</feature>
<feature type="region of interest" description="SS loop" evidence="1">
    <location>
        <begin position="326"/>
        <end position="335"/>
    </location>
</feature>
<feature type="active site" description="Proton acceptor" evidence="1">
    <location>
        <position position="327"/>
    </location>
</feature>
<feature type="binding site" evidence="1">
    <location>
        <position position="109"/>
    </location>
    <ligand>
        <name>L-aspartate</name>
        <dbReference type="ChEBI" id="CHEBI:29991"/>
    </ligand>
</feature>
<feature type="binding site" evidence="1">
    <location>
        <position position="148"/>
    </location>
    <ligand>
        <name>L-aspartate</name>
        <dbReference type="ChEBI" id="CHEBI:29991"/>
    </ligand>
</feature>
<feature type="binding site" evidence="1">
    <location>
        <position position="149"/>
    </location>
    <ligand>
        <name>L-aspartate</name>
        <dbReference type="ChEBI" id="CHEBI:29991"/>
    </ligand>
</feature>
<feature type="binding site" evidence="1">
    <location>
        <position position="150"/>
    </location>
    <ligand>
        <name>L-aspartate</name>
        <dbReference type="ChEBI" id="CHEBI:29991"/>
    </ligand>
</feature>
<feature type="binding site" evidence="1">
    <location>
        <position position="195"/>
    </location>
    <ligand>
        <name>L-aspartate</name>
        <dbReference type="ChEBI" id="CHEBI:29991"/>
    </ligand>
</feature>
<feature type="binding site" evidence="1">
    <location>
        <position position="328"/>
    </location>
    <ligand>
        <name>L-aspartate</name>
        <dbReference type="ChEBI" id="CHEBI:29991"/>
    </ligand>
</feature>
<feature type="binding site" evidence="1">
    <location>
        <position position="333"/>
    </location>
    <ligand>
        <name>L-aspartate</name>
        <dbReference type="ChEBI" id="CHEBI:29991"/>
    </ligand>
</feature>
<gene>
    <name evidence="3" type="primary">aspA</name>
</gene>
<keyword id="KW-0903">Direct protein sequencing</keyword>
<keyword id="KW-0456">Lyase</keyword>
<organism>
    <name type="scientific">Pseudomonas fluorescens</name>
    <dbReference type="NCBI Taxonomy" id="294"/>
    <lineage>
        <taxon>Bacteria</taxon>
        <taxon>Pseudomonadati</taxon>
        <taxon>Pseudomonadota</taxon>
        <taxon>Gammaproteobacteria</taxon>
        <taxon>Pseudomonadales</taxon>
        <taxon>Pseudomonadaceae</taxon>
        <taxon>Pseudomonas</taxon>
    </lineage>
</organism>
<evidence type="ECO:0000250" key="1">
    <source>
        <dbReference type="UniProtKB" id="Q9LCC6"/>
    </source>
</evidence>
<evidence type="ECO:0000269" key="2">
    <source>
    </source>
</evidence>
<evidence type="ECO:0000303" key="3">
    <source>
    </source>
</evidence>
<evidence type="ECO:0000303" key="4">
    <source>
    </source>
</evidence>
<evidence type="ECO:0000305" key="5"/>
<sequence>MISVMSSAASFRTEKDLLGVLEVPAQAYYGIQTLRAVNNFRLSGVPISHYPKLVVGLAMVKQAAADANRELGQLSERKHAAISEACARLIRGDFHEEFVVDMIQGGAGTSTNMNANEVIANIALEAMGHQKGEYQYLHPNNDVNMAQSTNDAYPTAIRLGLLLGHDALLASLDSLIQAFAAKGAEFSHVLKMGRTQLQDAVPMTLGQEFRAFATTLGEDLARLKTLAPELLTEVNLGGTAIGTGINADPRYQALAVQRLATISGQPLVPAADLIEATSDMGAFVLFSGMLKRTAVKLSKICNDLRLLSSGPRTGINEINLPARQPGSSIMPGKVNPVIPEAVNQVAFQVIGNDLALTMAAEGGQLQLNVMEPLIAFKIFDSIRLLQRAMDMLREHCIVGITANEARCRELVEHSIGLVTALNPYIGYENATRIARIALESGRGVLELVREEGLLDDAMLDDILRPENMIAPRLVPLKA</sequence>
<accession>P07346</accession>
<comment type="function">
    <text evidence="2">Catalyzes the reversible conversion of L-aspartate to fumarate and ammonia.</text>
</comment>
<comment type="catalytic activity">
    <reaction evidence="2">
        <text>L-aspartate = fumarate + NH4(+)</text>
        <dbReference type="Rhea" id="RHEA:16601"/>
        <dbReference type="ChEBI" id="CHEBI:28938"/>
        <dbReference type="ChEBI" id="CHEBI:29806"/>
        <dbReference type="ChEBI" id="CHEBI:29991"/>
        <dbReference type="EC" id="4.3.1.1"/>
    </reaction>
</comment>
<comment type="subunit">
    <text evidence="2">Homotetramer.</text>
</comment>
<comment type="similarity">
    <text evidence="5">Belongs to the class-II fumarase/aspartase family. Aspartase subfamily.</text>
</comment>